<protein>
    <recommendedName>
        <fullName evidence="1">Large ribosomal subunit protein uL16c</fullName>
    </recommendedName>
    <alternativeName>
        <fullName evidence="2">50S ribosomal protein L16, chloroplastic</fullName>
    </alternativeName>
</protein>
<dbReference type="EMBL" id="AP009366">
    <property type="protein sequence ID" value="BAF49807.1"/>
    <property type="molecule type" value="Genomic_DNA"/>
</dbReference>
<dbReference type="RefSeq" id="YP_001122983.1">
    <property type="nucleotide sequence ID" value="NC_009265.1"/>
</dbReference>
<dbReference type="SMR" id="A4QJF2"/>
<dbReference type="GeneID" id="4968614"/>
<dbReference type="GO" id="GO:0009507">
    <property type="term" value="C:chloroplast"/>
    <property type="evidence" value="ECO:0007669"/>
    <property type="project" value="UniProtKB-SubCell"/>
</dbReference>
<dbReference type="GO" id="GO:0005762">
    <property type="term" value="C:mitochondrial large ribosomal subunit"/>
    <property type="evidence" value="ECO:0007669"/>
    <property type="project" value="TreeGrafter"/>
</dbReference>
<dbReference type="GO" id="GO:0019843">
    <property type="term" value="F:rRNA binding"/>
    <property type="evidence" value="ECO:0007669"/>
    <property type="project" value="InterPro"/>
</dbReference>
<dbReference type="GO" id="GO:0003735">
    <property type="term" value="F:structural constituent of ribosome"/>
    <property type="evidence" value="ECO:0007669"/>
    <property type="project" value="InterPro"/>
</dbReference>
<dbReference type="GO" id="GO:0032543">
    <property type="term" value="P:mitochondrial translation"/>
    <property type="evidence" value="ECO:0007669"/>
    <property type="project" value="TreeGrafter"/>
</dbReference>
<dbReference type="CDD" id="cd01433">
    <property type="entry name" value="Ribosomal_L16_L10e"/>
    <property type="match status" value="1"/>
</dbReference>
<dbReference type="FunFam" id="3.90.1170.10:FF:000001">
    <property type="entry name" value="50S ribosomal protein L16"/>
    <property type="match status" value="1"/>
</dbReference>
<dbReference type="Gene3D" id="3.90.1170.10">
    <property type="entry name" value="Ribosomal protein L10e/L16"/>
    <property type="match status" value="1"/>
</dbReference>
<dbReference type="HAMAP" id="MF_01342">
    <property type="entry name" value="Ribosomal_uL16"/>
    <property type="match status" value="1"/>
</dbReference>
<dbReference type="InterPro" id="IPR047873">
    <property type="entry name" value="Ribosomal_uL16"/>
</dbReference>
<dbReference type="InterPro" id="IPR000114">
    <property type="entry name" value="Ribosomal_uL16_bact-type"/>
</dbReference>
<dbReference type="InterPro" id="IPR020798">
    <property type="entry name" value="Ribosomal_uL16_CS"/>
</dbReference>
<dbReference type="InterPro" id="IPR016180">
    <property type="entry name" value="Ribosomal_uL16_dom"/>
</dbReference>
<dbReference type="InterPro" id="IPR036920">
    <property type="entry name" value="Ribosomal_uL16_sf"/>
</dbReference>
<dbReference type="NCBIfam" id="TIGR01164">
    <property type="entry name" value="rplP_bact"/>
    <property type="match status" value="1"/>
</dbReference>
<dbReference type="PANTHER" id="PTHR12220">
    <property type="entry name" value="50S/60S RIBOSOMAL PROTEIN L16"/>
    <property type="match status" value="1"/>
</dbReference>
<dbReference type="PANTHER" id="PTHR12220:SF13">
    <property type="entry name" value="LARGE RIBOSOMAL SUBUNIT PROTEIN UL16M"/>
    <property type="match status" value="1"/>
</dbReference>
<dbReference type="Pfam" id="PF00252">
    <property type="entry name" value="Ribosomal_L16"/>
    <property type="match status" value="1"/>
</dbReference>
<dbReference type="PRINTS" id="PR00060">
    <property type="entry name" value="RIBOSOMALL16"/>
</dbReference>
<dbReference type="SUPFAM" id="SSF54686">
    <property type="entry name" value="Ribosomal protein L16p/L10e"/>
    <property type="match status" value="1"/>
</dbReference>
<dbReference type="PROSITE" id="PS00586">
    <property type="entry name" value="RIBOSOMAL_L16_1"/>
    <property type="match status" value="1"/>
</dbReference>
<dbReference type="PROSITE" id="PS00701">
    <property type="entry name" value="RIBOSOMAL_L16_2"/>
    <property type="match status" value="1"/>
</dbReference>
<gene>
    <name evidence="1" type="primary">rpl16</name>
</gene>
<reference key="1">
    <citation type="submission" date="2007-03" db="EMBL/GenBank/DDBJ databases">
        <title>Sequencing analysis of Aethionema coridifolium chloroplast DNA.</title>
        <authorList>
            <person name="Hosouchi T."/>
            <person name="Tsuruoka H."/>
            <person name="Kotani H."/>
        </authorList>
    </citation>
    <scope>NUCLEOTIDE SEQUENCE [LARGE SCALE GENOMIC DNA]</scope>
</reference>
<evidence type="ECO:0000255" key="1">
    <source>
        <dbReference type="HAMAP-Rule" id="MF_01342"/>
    </source>
</evidence>
<evidence type="ECO:0000305" key="2"/>
<keyword id="KW-0150">Chloroplast</keyword>
<keyword id="KW-0934">Plastid</keyword>
<keyword id="KW-0687">Ribonucleoprotein</keyword>
<keyword id="KW-0689">Ribosomal protein</keyword>
<comment type="subunit">
    <text evidence="1">Part of the 50S ribosomal subunit.</text>
</comment>
<comment type="subcellular location">
    <subcellularLocation>
        <location>Plastid</location>
        <location>Chloroplast</location>
    </subcellularLocation>
</comment>
<comment type="similarity">
    <text evidence="1">Belongs to the universal ribosomal protein uL16 family.</text>
</comment>
<accession>A4QJF2</accession>
<organism>
    <name type="scientific">Aethionema cordifolium</name>
    <name type="common">Lebanon stonecress</name>
    <dbReference type="NCBI Taxonomy" id="434059"/>
    <lineage>
        <taxon>Eukaryota</taxon>
        <taxon>Viridiplantae</taxon>
        <taxon>Streptophyta</taxon>
        <taxon>Embryophyta</taxon>
        <taxon>Tracheophyta</taxon>
        <taxon>Spermatophyta</taxon>
        <taxon>Magnoliopsida</taxon>
        <taxon>eudicotyledons</taxon>
        <taxon>Gunneridae</taxon>
        <taxon>Pentapetalae</taxon>
        <taxon>rosids</taxon>
        <taxon>malvids</taxon>
        <taxon>Brassicales</taxon>
        <taxon>Brassicaceae</taxon>
        <taxon>Aethionemeae</taxon>
        <taxon>Aethionema</taxon>
    </lineage>
</organism>
<sequence>MLSPKRTRFRKQHRGRLKGISYRGNRICFGRYALQTLEPAWITSRQIEAGRRAMTRNVRRGGKIWVRIFPDKPVTVRPAETRMGSGKGSPEYWVAVVKPGKILYEMGGVPENIARKAISIAASKMPIKTQFIISE</sequence>
<feature type="chain" id="PRO_0000354611" description="Large ribosomal subunit protein uL16c">
    <location>
        <begin position="1"/>
        <end position="135"/>
    </location>
</feature>
<geneLocation type="chloroplast"/>
<name>RK16_AETCO</name>
<proteinExistence type="inferred from homology"/>